<proteinExistence type="inferred from homology"/>
<reference key="1">
    <citation type="journal article" date="2004" name="Mol. Biol. Evol.">
        <title>The chloroplast genome of Nymphaea alba: whole-genome analyses and the problem of identifying the most basal angiosperm.</title>
        <authorList>
            <person name="Goremykin V.V."/>
            <person name="Hirsch-Ernst K.I."/>
            <person name="Woelfl S."/>
            <person name="Hellwig F.H."/>
        </authorList>
    </citation>
    <scope>NUCLEOTIDE SEQUENCE [LARGE SCALE GENOMIC DNA]</scope>
</reference>
<evidence type="ECO:0000250" key="1"/>
<evidence type="ECO:0000305" key="2"/>
<gene>
    <name type="primary">rps15</name>
</gene>
<organism>
    <name type="scientific">Nymphaea alba</name>
    <name type="common">White water-lily</name>
    <name type="synonym">Castalia alba</name>
    <dbReference type="NCBI Taxonomy" id="34301"/>
    <lineage>
        <taxon>Eukaryota</taxon>
        <taxon>Viridiplantae</taxon>
        <taxon>Streptophyta</taxon>
        <taxon>Embryophyta</taxon>
        <taxon>Tracheophyta</taxon>
        <taxon>Spermatophyta</taxon>
        <taxon>Magnoliopsida</taxon>
        <taxon>Nymphaeales</taxon>
        <taxon>Nymphaeaceae</taxon>
        <taxon>Nymphaea</taxon>
    </lineage>
</organism>
<dbReference type="EMBL" id="AJ627251">
    <property type="protein sequence ID" value="CAF28653.1"/>
    <property type="molecule type" value="Genomic_DNA"/>
</dbReference>
<dbReference type="RefSeq" id="YP_053213.1">
    <property type="nucleotide sequence ID" value="NC_006050.1"/>
</dbReference>
<dbReference type="SMR" id="Q6EVZ3"/>
<dbReference type="GeneID" id="2896202"/>
<dbReference type="GO" id="GO:0009507">
    <property type="term" value="C:chloroplast"/>
    <property type="evidence" value="ECO:0007669"/>
    <property type="project" value="UniProtKB-SubCell"/>
</dbReference>
<dbReference type="GO" id="GO:1990904">
    <property type="term" value="C:ribonucleoprotein complex"/>
    <property type="evidence" value="ECO:0007669"/>
    <property type="project" value="UniProtKB-KW"/>
</dbReference>
<dbReference type="GO" id="GO:0005840">
    <property type="term" value="C:ribosome"/>
    <property type="evidence" value="ECO:0007669"/>
    <property type="project" value="UniProtKB-KW"/>
</dbReference>
<dbReference type="GO" id="GO:0003735">
    <property type="term" value="F:structural constituent of ribosome"/>
    <property type="evidence" value="ECO:0007669"/>
    <property type="project" value="InterPro"/>
</dbReference>
<dbReference type="GO" id="GO:0006412">
    <property type="term" value="P:translation"/>
    <property type="evidence" value="ECO:0007669"/>
    <property type="project" value="UniProtKB-UniRule"/>
</dbReference>
<dbReference type="CDD" id="cd00677">
    <property type="entry name" value="S15_NS1_EPRS_RNA-bind"/>
    <property type="match status" value="1"/>
</dbReference>
<dbReference type="Gene3D" id="1.10.287.10">
    <property type="entry name" value="S15/NS1, RNA-binding"/>
    <property type="match status" value="1"/>
</dbReference>
<dbReference type="HAMAP" id="MF_01343_B">
    <property type="entry name" value="Ribosomal_uS15_B"/>
    <property type="match status" value="1"/>
</dbReference>
<dbReference type="InterPro" id="IPR000589">
    <property type="entry name" value="Ribosomal_uS15"/>
</dbReference>
<dbReference type="InterPro" id="IPR005290">
    <property type="entry name" value="Ribosomal_uS15_bac-type"/>
</dbReference>
<dbReference type="InterPro" id="IPR009068">
    <property type="entry name" value="uS15_NS1_RNA-bd_sf"/>
</dbReference>
<dbReference type="NCBIfam" id="TIGR00952">
    <property type="entry name" value="S15_bact"/>
    <property type="match status" value="1"/>
</dbReference>
<dbReference type="PANTHER" id="PTHR23321">
    <property type="entry name" value="RIBOSOMAL PROTEIN S15, BACTERIAL AND ORGANELLAR"/>
    <property type="match status" value="1"/>
</dbReference>
<dbReference type="PANTHER" id="PTHR23321:SF26">
    <property type="entry name" value="SMALL RIBOSOMAL SUBUNIT PROTEIN US15M"/>
    <property type="match status" value="1"/>
</dbReference>
<dbReference type="Pfam" id="PF00312">
    <property type="entry name" value="Ribosomal_S15"/>
    <property type="match status" value="1"/>
</dbReference>
<dbReference type="SMART" id="SM01387">
    <property type="entry name" value="Ribosomal_S15"/>
    <property type="match status" value="1"/>
</dbReference>
<dbReference type="SUPFAM" id="SSF47060">
    <property type="entry name" value="S15/NS1 RNA-binding domain"/>
    <property type="match status" value="1"/>
</dbReference>
<dbReference type="PROSITE" id="PS00362">
    <property type="entry name" value="RIBOSOMAL_S15"/>
    <property type="match status" value="1"/>
</dbReference>
<feature type="chain" id="PRO_0000115640" description="Small ribosomal subunit protein uS15c">
    <location>
        <begin position="1"/>
        <end position="87"/>
    </location>
</feature>
<sequence>MVKNSPISVIPQEEKRGSVEFQVFNFTNKIERLTSHLELHRRDYLSQRGLRKILGKRQRLLVYLSKKNRVRYRELIGQLGIREPKTG</sequence>
<accession>Q6EVZ3</accession>
<protein>
    <recommendedName>
        <fullName evidence="2">Small ribosomal subunit protein uS15c</fullName>
    </recommendedName>
    <alternativeName>
        <fullName>30S ribosomal protein S15, chloroplastic</fullName>
    </alternativeName>
</protein>
<keyword id="KW-0150">Chloroplast</keyword>
<keyword id="KW-0934">Plastid</keyword>
<keyword id="KW-0687">Ribonucleoprotein</keyword>
<keyword id="KW-0689">Ribosomal protein</keyword>
<name>RR15_NYMAL</name>
<geneLocation type="chloroplast"/>
<comment type="subunit">
    <text evidence="1">Part of the 30S ribosomal subunit.</text>
</comment>
<comment type="subcellular location">
    <subcellularLocation>
        <location>Plastid</location>
        <location>Chloroplast</location>
    </subcellularLocation>
</comment>
<comment type="similarity">
    <text evidence="2">Belongs to the universal ribosomal protein uS15 family.</text>
</comment>